<organism>
    <name type="scientific">Salmonella typhimurium (strain LT2 / SGSC1412 / ATCC 700720)</name>
    <dbReference type="NCBI Taxonomy" id="99287"/>
    <lineage>
        <taxon>Bacteria</taxon>
        <taxon>Pseudomonadati</taxon>
        <taxon>Pseudomonadota</taxon>
        <taxon>Gammaproteobacteria</taxon>
        <taxon>Enterobacterales</taxon>
        <taxon>Enterobacteriaceae</taxon>
        <taxon>Salmonella</taxon>
    </lineage>
</organism>
<evidence type="ECO:0000250" key="1"/>
<evidence type="ECO:0000305" key="2"/>
<evidence type="ECO:0007829" key="3">
    <source>
        <dbReference type="PDB" id="4ER9"/>
    </source>
</evidence>
<reference key="1">
    <citation type="journal article" date="2001" name="Nature">
        <title>Complete genome sequence of Salmonella enterica serovar Typhimurium LT2.</title>
        <authorList>
            <person name="McClelland M."/>
            <person name="Sanderson K.E."/>
            <person name="Spieth J."/>
            <person name="Clifton S.W."/>
            <person name="Latreille P."/>
            <person name="Courtney L."/>
            <person name="Porwollik S."/>
            <person name="Ali J."/>
            <person name="Dante M."/>
            <person name="Du F."/>
            <person name="Hou S."/>
            <person name="Layman D."/>
            <person name="Leonard S."/>
            <person name="Nguyen C."/>
            <person name="Scott K."/>
            <person name="Holmes A."/>
            <person name="Grewal N."/>
            <person name="Mulvaney E."/>
            <person name="Ryan E."/>
            <person name="Sun H."/>
            <person name="Florea L."/>
            <person name="Miller W."/>
            <person name="Stoneking T."/>
            <person name="Nhan M."/>
            <person name="Waterston R."/>
            <person name="Wilson R.K."/>
        </authorList>
    </citation>
    <scope>NUCLEOTIDE SEQUENCE [LARGE SCALE GENOMIC DNA]</scope>
    <source>
        <strain>LT2 / SGSC1412 / ATCC 700720</strain>
    </source>
</reference>
<feature type="signal peptide" evidence="1">
    <location>
        <begin position="1"/>
        <end position="22"/>
    </location>
</feature>
<feature type="chain" id="PRO_0000003641" description="Soluble cytochrome b562">
    <location>
        <begin position="23"/>
        <end position="128"/>
    </location>
</feature>
<feature type="binding site" description="axial binding residue" evidence="1">
    <location>
        <position position="29"/>
    </location>
    <ligand>
        <name>heme b</name>
        <dbReference type="ChEBI" id="CHEBI:60344"/>
    </ligand>
    <ligandPart>
        <name>Fe</name>
        <dbReference type="ChEBI" id="CHEBI:18248"/>
    </ligandPart>
</feature>
<feature type="binding site" description="axial binding residue" evidence="1">
    <location>
        <position position="124"/>
    </location>
    <ligand>
        <name>heme b</name>
        <dbReference type="ChEBI" id="CHEBI:60344"/>
    </ligand>
    <ligandPart>
        <name>Fe</name>
        <dbReference type="ChEBI" id="CHEBI:18248"/>
    </ligandPart>
</feature>
<feature type="helix" evidence="3">
    <location>
        <begin position="24"/>
        <end position="41"/>
    </location>
</feature>
<feature type="helix" evidence="3">
    <location>
        <begin position="45"/>
        <end position="62"/>
    </location>
</feature>
<feature type="helix" evidence="3">
    <location>
        <begin position="68"/>
        <end position="70"/>
    </location>
</feature>
<feature type="helix" evidence="3">
    <location>
        <begin position="78"/>
        <end position="102"/>
    </location>
</feature>
<feature type="helix" evidence="3">
    <location>
        <begin position="106"/>
        <end position="113"/>
    </location>
</feature>
<feature type="helix" evidence="3">
    <location>
        <begin position="116"/>
        <end position="125"/>
    </location>
</feature>
<sequence>MRKSLLAILAVSSLVFGSAVFAADLEDNMDILNDNLKVVEKTDSAPELKAALTKMRAAALDAQKATPPKLEDKAPDSPEMKDFRHGFDILVGQIDGALKLANEGNVKEAKAAAEALKTTRNTYHKKYR</sequence>
<comment type="function">
    <text evidence="1">Electron-transport protein of unknown function.</text>
</comment>
<comment type="cofactor">
    <cofactor evidence="1">
        <name>heme b</name>
        <dbReference type="ChEBI" id="CHEBI:60344"/>
    </cofactor>
    <text evidence="1">Binds 1 heme b (iron(II)-protoporphyrin IX) group per molecule.</text>
</comment>
<comment type="subcellular location">
    <subcellularLocation>
        <location evidence="1">Periplasm</location>
    </subcellularLocation>
</comment>
<comment type="similarity">
    <text evidence="2">Belongs to the cytochrome b562 family.</text>
</comment>
<name>C562_SALTY</name>
<dbReference type="EMBL" id="AE006468">
    <property type="protein sequence ID" value="AAL23259.1"/>
    <property type="molecule type" value="Genomic_DNA"/>
</dbReference>
<dbReference type="RefSeq" id="NP_463300.1">
    <property type="nucleotide sequence ID" value="NC_003197.2"/>
</dbReference>
<dbReference type="RefSeq" id="WP_001232231.1">
    <property type="nucleotide sequence ID" value="NC_003197.2"/>
</dbReference>
<dbReference type="PDB" id="4ER9">
    <property type="method" value="X-ray"/>
    <property type="resolution" value="1.90 A"/>
    <property type="chains" value="A=1-128"/>
</dbReference>
<dbReference type="PDBsum" id="4ER9"/>
<dbReference type="SMR" id="P63727"/>
<dbReference type="STRING" id="99287.STM4439"/>
<dbReference type="PaxDb" id="99287-STM4439"/>
<dbReference type="GeneID" id="1255965"/>
<dbReference type="KEGG" id="stm:STM4439"/>
<dbReference type="PATRIC" id="fig|99287.12.peg.4669"/>
<dbReference type="HOGENOM" id="CLU_140814_1_1_6"/>
<dbReference type="OMA" id="ATRNENH"/>
<dbReference type="BioCyc" id="SENT99287:STM4439-MONOMER"/>
<dbReference type="EvolutionaryTrace" id="P63727"/>
<dbReference type="Proteomes" id="UP000001014">
    <property type="component" value="Chromosome"/>
</dbReference>
<dbReference type="GO" id="GO:0042597">
    <property type="term" value="C:periplasmic space"/>
    <property type="evidence" value="ECO:0007669"/>
    <property type="project" value="UniProtKB-SubCell"/>
</dbReference>
<dbReference type="GO" id="GO:0009055">
    <property type="term" value="F:electron transfer activity"/>
    <property type="evidence" value="ECO:0007669"/>
    <property type="project" value="InterPro"/>
</dbReference>
<dbReference type="GO" id="GO:0020037">
    <property type="term" value="F:heme binding"/>
    <property type="evidence" value="ECO:0007669"/>
    <property type="project" value="InterPro"/>
</dbReference>
<dbReference type="GO" id="GO:0005506">
    <property type="term" value="F:iron ion binding"/>
    <property type="evidence" value="ECO:0007669"/>
    <property type="project" value="InterPro"/>
</dbReference>
<dbReference type="GO" id="GO:0022900">
    <property type="term" value="P:electron transport chain"/>
    <property type="evidence" value="ECO:0007669"/>
    <property type="project" value="InterPro"/>
</dbReference>
<dbReference type="Gene3D" id="1.20.120.10">
    <property type="entry name" value="Cytochrome c/b562"/>
    <property type="match status" value="1"/>
</dbReference>
<dbReference type="InterPro" id="IPR009155">
    <property type="entry name" value="Cyt_b562"/>
</dbReference>
<dbReference type="InterPro" id="IPR010980">
    <property type="entry name" value="Cyt_c/b562"/>
</dbReference>
<dbReference type="NCBIfam" id="NF011632">
    <property type="entry name" value="PRK15058.1"/>
    <property type="match status" value="1"/>
</dbReference>
<dbReference type="Pfam" id="PF07361">
    <property type="entry name" value="Cytochrom_B562"/>
    <property type="match status" value="1"/>
</dbReference>
<dbReference type="PIRSF" id="PIRSF000029">
    <property type="entry name" value="Cytochrome_b562"/>
    <property type="match status" value="1"/>
</dbReference>
<dbReference type="SUPFAM" id="SSF47175">
    <property type="entry name" value="Cytochromes"/>
    <property type="match status" value="1"/>
</dbReference>
<accession>P63727</accession>
<accession>Q8XGQ1</accession>
<gene>
    <name type="primary">cybC</name>
    <name type="ordered locus">STM4439</name>
</gene>
<keyword id="KW-0002">3D-structure</keyword>
<keyword id="KW-0249">Electron transport</keyword>
<keyword id="KW-0349">Heme</keyword>
<keyword id="KW-0408">Iron</keyword>
<keyword id="KW-0479">Metal-binding</keyword>
<keyword id="KW-0574">Periplasm</keyword>
<keyword id="KW-1185">Reference proteome</keyword>
<keyword id="KW-0732">Signal</keyword>
<keyword id="KW-0813">Transport</keyword>
<protein>
    <recommendedName>
        <fullName>Soluble cytochrome b562</fullName>
        <shortName>Cytochrome b-562</shortName>
    </recommendedName>
</protein>
<proteinExistence type="evidence at protein level"/>